<comment type="function">
    <text evidence="1">DNA-dependent RNA polymerase (RNAP) catalyzes the transcription of DNA into RNA using the four ribonucleoside triphosphates as substrates.</text>
</comment>
<comment type="catalytic activity">
    <reaction evidence="1">
        <text>RNA(n) + a ribonucleoside 5'-triphosphate = RNA(n+1) + diphosphate</text>
        <dbReference type="Rhea" id="RHEA:21248"/>
        <dbReference type="Rhea" id="RHEA-COMP:14527"/>
        <dbReference type="Rhea" id="RHEA-COMP:17342"/>
        <dbReference type="ChEBI" id="CHEBI:33019"/>
        <dbReference type="ChEBI" id="CHEBI:61557"/>
        <dbReference type="ChEBI" id="CHEBI:140395"/>
        <dbReference type="EC" id="2.7.7.6"/>
    </reaction>
</comment>
<comment type="cofactor">
    <cofactor evidence="1">
        <name>Zn(2+)</name>
        <dbReference type="ChEBI" id="CHEBI:29105"/>
    </cofactor>
    <text evidence="1">Binds 1 zinc ion.</text>
</comment>
<comment type="subunit">
    <text evidence="1">Part of the RNA polymerase complex.</text>
</comment>
<comment type="subcellular location">
    <subcellularLocation>
        <location evidence="1">Cytoplasm</location>
    </subcellularLocation>
</comment>
<comment type="similarity">
    <text evidence="1">Belongs to the archaeal Rpo10/eukaryotic RPB10 RNA polymerase subunit family.</text>
</comment>
<proteinExistence type="inferred from homology"/>
<name>RPO10_METKA</name>
<organism>
    <name type="scientific">Methanopyrus kandleri (strain AV19 / DSM 6324 / JCM 9639 / NBRC 100938)</name>
    <dbReference type="NCBI Taxonomy" id="190192"/>
    <lineage>
        <taxon>Archaea</taxon>
        <taxon>Methanobacteriati</taxon>
        <taxon>Methanobacteriota</taxon>
        <taxon>Methanomada group</taxon>
        <taxon>Methanopyri</taxon>
        <taxon>Methanopyrales</taxon>
        <taxon>Methanopyraceae</taxon>
        <taxon>Methanopyrus</taxon>
    </lineage>
</organism>
<accession>Q8TVB4</accession>
<dbReference type="EC" id="2.7.7.6" evidence="1"/>
<dbReference type="EMBL" id="AE009439">
    <property type="protein sequence ID" value="AAM02691.1"/>
    <property type="molecule type" value="Genomic_DNA"/>
</dbReference>
<dbReference type="RefSeq" id="WP_011019846.1">
    <property type="nucleotide sequence ID" value="NC_003551.1"/>
</dbReference>
<dbReference type="SMR" id="Q8TVB4"/>
<dbReference type="FunCoup" id="Q8TVB4">
    <property type="interactions" value="65"/>
</dbReference>
<dbReference type="STRING" id="190192.MK1478"/>
<dbReference type="PaxDb" id="190192-MK1478"/>
<dbReference type="EnsemblBacteria" id="AAM02691">
    <property type="protein sequence ID" value="AAM02691"/>
    <property type="gene ID" value="MK1478"/>
</dbReference>
<dbReference type="GeneID" id="1478073"/>
<dbReference type="KEGG" id="mka:MK1478"/>
<dbReference type="PATRIC" id="fig|190192.8.peg.1634"/>
<dbReference type="HOGENOM" id="CLU_143122_2_1_2"/>
<dbReference type="InParanoid" id="Q8TVB4"/>
<dbReference type="OrthoDB" id="371754at2157"/>
<dbReference type="Proteomes" id="UP000001826">
    <property type="component" value="Chromosome"/>
</dbReference>
<dbReference type="GO" id="GO:0005737">
    <property type="term" value="C:cytoplasm"/>
    <property type="evidence" value="ECO:0007669"/>
    <property type="project" value="UniProtKB-SubCell"/>
</dbReference>
<dbReference type="GO" id="GO:0000428">
    <property type="term" value="C:DNA-directed RNA polymerase complex"/>
    <property type="evidence" value="ECO:0007669"/>
    <property type="project" value="UniProtKB-KW"/>
</dbReference>
<dbReference type="GO" id="GO:0003677">
    <property type="term" value="F:DNA binding"/>
    <property type="evidence" value="ECO:0007669"/>
    <property type="project" value="InterPro"/>
</dbReference>
<dbReference type="GO" id="GO:0003899">
    <property type="term" value="F:DNA-directed RNA polymerase activity"/>
    <property type="evidence" value="ECO:0007669"/>
    <property type="project" value="UniProtKB-UniRule"/>
</dbReference>
<dbReference type="GO" id="GO:0008270">
    <property type="term" value="F:zinc ion binding"/>
    <property type="evidence" value="ECO:0007669"/>
    <property type="project" value="UniProtKB-UniRule"/>
</dbReference>
<dbReference type="GO" id="GO:0006360">
    <property type="term" value="P:transcription by RNA polymerase I"/>
    <property type="evidence" value="ECO:0007669"/>
    <property type="project" value="TreeGrafter"/>
</dbReference>
<dbReference type="GO" id="GO:0006366">
    <property type="term" value="P:transcription by RNA polymerase II"/>
    <property type="evidence" value="ECO:0007669"/>
    <property type="project" value="TreeGrafter"/>
</dbReference>
<dbReference type="GO" id="GO:0042797">
    <property type="term" value="P:tRNA transcription by RNA polymerase III"/>
    <property type="evidence" value="ECO:0007669"/>
    <property type="project" value="TreeGrafter"/>
</dbReference>
<dbReference type="FunFam" id="1.10.10.60:FF:000024">
    <property type="entry name" value="DNA-directed RNA polymerases I, II, and III subunit"/>
    <property type="match status" value="1"/>
</dbReference>
<dbReference type="Gene3D" id="1.10.10.60">
    <property type="entry name" value="Homeodomain-like"/>
    <property type="match status" value="1"/>
</dbReference>
<dbReference type="HAMAP" id="MF_00250">
    <property type="entry name" value="RNApol_arch_Rpo10"/>
    <property type="match status" value="1"/>
</dbReference>
<dbReference type="InterPro" id="IPR023580">
    <property type="entry name" value="RNA_pol_su_RPB10"/>
</dbReference>
<dbReference type="InterPro" id="IPR020789">
    <property type="entry name" value="RNA_pol_suN_Zn-BS"/>
</dbReference>
<dbReference type="InterPro" id="IPR000268">
    <property type="entry name" value="RPABC5/Rpb10"/>
</dbReference>
<dbReference type="NCBIfam" id="NF003089">
    <property type="entry name" value="PRK04016.1"/>
    <property type="match status" value="1"/>
</dbReference>
<dbReference type="PANTHER" id="PTHR23431:SF3">
    <property type="entry name" value="DNA-DIRECTED RNA POLYMERASES I, II, AND III SUBUNIT RPABC5"/>
    <property type="match status" value="1"/>
</dbReference>
<dbReference type="PANTHER" id="PTHR23431">
    <property type="entry name" value="DNA-DIRECTED RNA POLYMERASES I, II, AND III SUBUNIT RPABC5 FAMILY MEMBER"/>
    <property type="match status" value="1"/>
</dbReference>
<dbReference type="Pfam" id="PF01194">
    <property type="entry name" value="RNA_pol_N"/>
    <property type="match status" value="1"/>
</dbReference>
<dbReference type="PIRSF" id="PIRSF005653">
    <property type="entry name" value="RNA_pol_N/8_sub"/>
    <property type="match status" value="1"/>
</dbReference>
<dbReference type="SUPFAM" id="SSF46924">
    <property type="entry name" value="RNA polymerase subunit RPB10"/>
    <property type="match status" value="1"/>
</dbReference>
<dbReference type="PROSITE" id="PS01112">
    <property type="entry name" value="RNA_POL_N_8KD"/>
    <property type="match status" value="1"/>
</dbReference>
<protein>
    <recommendedName>
        <fullName evidence="1">DNA-directed RNA polymerase subunit Rpo10</fullName>
        <ecNumber evidence="1">2.7.7.6</ecNumber>
    </recommendedName>
    <alternativeName>
        <fullName evidence="1">DNA-directed RNA polymerase subunit N</fullName>
    </alternativeName>
</protein>
<keyword id="KW-0963">Cytoplasm</keyword>
<keyword id="KW-0240">DNA-directed RNA polymerase</keyword>
<keyword id="KW-0479">Metal-binding</keyword>
<keyword id="KW-0548">Nucleotidyltransferase</keyword>
<keyword id="KW-1185">Reference proteome</keyword>
<keyword id="KW-0804">Transcription</keyword>
<keyword id="KW-0808">Transferase</keyword>
<keyword id="KW-0862">Zinc</keyword>
<evidence type="ECO:0000255" key="1">
    <source>
        <dbReference type="HAMAP-Rule" id="MF_00250"/>
    </source>
</evidence>
<reference key="1">
    <citation type="journal article" date="2002" name="Proc. Natl. Acad. Sci. U.S.A.">
        <title>The complete genome of hyperthermophile Methanopyrus kandleri AV19 and monophyly of archaeal methanogens.</title>
        <authorList>
            <person name="Slesarev A.I."/>
            <person name="Mezhevaya K.V."/>
            <person name="Makarova K.S."/>
            <person name="Polushin N.N."/>
            <person name="Shcherbinina O.V."/>
            <person name="Shakhova V.V."/>
            <person name="Belova G.I."/>
            <person name="Aravind L."/>
            <person name="Natale D.A."/>
            <person name="Rogozin I.B."/>
            <person name="Tatusov R.L."/>
            <person name="Wolf Y.I."/>
            <person name="Stetter K.O."/>
            <person name="Malykh A.G."/>
            <person name="Koonin E.V."/>
            <person name="Kozyavkin S.A."/>
        </authorList>
    </citation>
    <scope>NUCLEOTIDE SEQUENCE [LARGE SCALE GENOMIC DNA]</scope>
    <source>
        <strain>AV19 / DSM 6324 / JCM 9639 / NBRC 100938</strain>
    </source>
</reference>
<gene>
    <name evidence="1" type="primary">rpo10</name>
    <name evidence="1" type="synonym">rpoN</name>
    <name type="ordered locus">MK1478</name>
</gene>
<feature type="chain" id="PRO_0000121350" description="DNA-directed RNA polymerase subunit Rpo10">
    <location>
        <begin position="1"/>
        <end position="72"/>
    </location>
</feature>
<feature type="binding site" evidence="1">
    <location>
        <position position="7"/>
    </location>
    <ligand>
        <name>Zn(2+)</name>
        <dbReference type="ChEBI" id="CHEBI:29105"/>
    </ligand>
</feature>
<feature type="binding site" evidence="1">
    <location>
        <position position="10"/>
    </location>
    <ligand>
        <name>Zn(2+)</name>
        <dbReference type="ChEBI" id="CHEBI:29105"/>
    </ligand>
</feature>
<feature type="binding site" evidence="1">
    <location>
        <position position="45"/>
    </location>
    <ligand>
        <name>Zn(2+)</name>
        <dbReference type="ChEBI" id="CHEBI:29105"/>
    </ligand>
</feature>
<feature type="binding site" evidence="1">
    <location>
        <position position="46"/>
    </location>
    <ligand>
        <name>Zn(2+)</name>
        <dbReference type="ChEBI" id="CHEBI:29105"/>
    </ligand>
</feature>
<sequence length="72" mass="8423">MIIPIRCFTCGRPIAHLWEKYVELIEEEGMEPGEALDELGVDRYCCRRMFLSHVDLLEESLPYTPPRLGMPR</sequence>